<name>SURE_SHELP</name>
<organism>
    <name type="scientific">Shewanella loihica (strain ATCC BAA-1088 / PV-4)</name>
    <dbReference type="NCBI Taxonomy" id="323850"/>
    <lineage>
        <taxon>Bacteria</taxon>
        <taxon>Pseudomonadati</taxon>
        <taxon>Pseudomonadota</taxon>
        <taxon>Gammaproteobacteria</taxon>
        <taxon>Alteromonadales</taxon>
        <taxon>Shewanellaceae</taxon>
        <taxon>Shewanella</taxon>
    </lineage>
</organism>
<comment type="function">
    <text evidence="1">Nucleotidase that shows phosphatase activity on nucleoside 5'-monophosphates.</text>
</comment>
<comment type="catalytic activity">
    <reaction evidence="1">
        <text>a ribonucleoside 5'-phosphate + H2O = a ribonucleoside + phosphate</text>
        <dbReference type="Rhea" id="RHEA:12484"/>
        <dbReference type="ChEBI" id="CHEBI:15377"/>
        <dbReference type="ChEBI" id="CHEBI:18254"/>
        <dbReference type="ChEBI" id="CHEBI:43474"/>
        <dbReference type="ChEBI" id="CHEBI:58043"/>
        <dbReference type="EC" id="3.1.3.5"/>
    </reaction>
</comment>
<comment type="cofactor">
    <cofactor evidence="1">
        <name>a divalent metal cation</name>
        <dbReference type="ChEBI" id="CHEBI:60240"/>
    </cofactor>
    <text evidence="1">Binds 1 divalent metal cation per subunit.</text>
</comment>
<comment type="subcellular location">
    <subcellularLocation>
        <location evidence="1">Cytoplasm</location>
    </subcellularLocation>
</comment>
<comment type="similarity">
    <text evidence="1">Belongs to the SurE nucleotidase family.</text>
</comment>
<reference key="1">
    <citation type="submission" date="2007-03" db="EMBL/GenBank/DDBJ databases">
        <title>Complete sequence of Shewanella loihica PV-4.</title>
        <authorList>
            <consortium name="US DOE Joint Genome Institute"/>
            <person name="Copeland A."/>
            <person name="Lucas S."/>
            <person name="Lapidus A."/>
            <person name="Barry K."/>
            <person name="Detter J.C."/>
            <person name="Glavina del Rio T."/>
            <person name="Hammon N."/>
            <person name="Israni S."/>
            <person name="Dalin E."/>
            <person name="Tice H."/>
            <person name="Pitluck S."/>
            <person name="Chain P."/>
            <person name="Malfatti S."/>
            <person name="Shin M."/>
            <person name="Vergez L."/>
            <person name="Schmutz J."/>
            <person name="Larimer F."/>
            <person name="Land M."/>
            <person name="Hauser L."/>
            <person name="Kyrpides N."/>
            <person name="Mikhailova N."/>
            <person name="Romine M.F."/>
            <person name="Serres G."/>
            <person name="Fredrickson J."/>
            <person name="Tiedje J."/>
            <person name="Richardson P."/>
        </authorList>
    </citation>
    <scope>NUCLEOTIDE SEQUENCE [LARGE SCALE GENOMIC DNA]</scope>
    <source>
        <strain>ATCC BAA-1088 / PV-4</strain>
    </source>
</reference>
<dbReference type="EC" id="3.1.3.5" evidence="1"/>
<dbReference type="EMBL" id="CP000606">
    <property type="protein sequence ID" value="ABO23080.1"/>
    <property type="molecule type" value="Genomic_DNA"/>
</dbReference>
<dbReference type="RefSeq" id="WP_011865012.1">
    <property type="nucleotide sequence ID" value="NC_009092.1"/>
</dbReference>
<dbReference type="SMR" id="A3QC82"/>
<dbReference type="STRING" id="323850.Shew_1210"/>
<dbReference type="KEGG" id="slo:Shew_1210"/>
<dbReference type="eggNOG" id="COG0496">
    <property type="taxonomic scope" value="Bacteria"/>
</dbReference>
<dbReference type="HOGENOM" id="CLU_045192_1_2_6"/>
<dbReference type="OrthoDB" id="9780815at2"/>
<dbReference type="Proteomes" id="UP000001558">
    <property type="component" value="Chromosome"/>
</dbReference>
<dbReference type="GO" id="GO:0005737">
    <property type="term" value="C:cytoplasm"/>
    <property type="evidence" value="ECO:0007669"/>
    <property type="project" value="UniProtKB-SubCell"/>
</dbReference>
<dbReference type="GO" id="GO:0008254">
    <property type="term" value="F:3'-nucleotidase activity"/>
    <property type="evidence" value="ECO:0007669"/>
    <property type="project" value="TreeGrafter"/>
</dbReference>
<dbReference type="GO" id="GO:0008253">
    <property type="term" value="F:5'-nucleotidase activity"/>
    <property type="evidence" value="ECO:0007669"/>
    <property type="project" value="UniProtKB-UniRule"/>
</dbReference>
<dbReference type="GO" id="GO:0004309">
    <property type="term" value="F:exopolyphosphatase activity"/>
    <property type="evidence" value="ECO:0007669"/>
    <property type="project" value="TreeGrafter"/>
</dbReference>
<dbReference type="GO" id="GO:0046872">
    <property type="term" value="F:metal ion binding"/>
    <property type="evidence" value="ECO:0007669"/>
    <property type="project" value="UniProtKB-UniRule"/>
</dbReference>
<dbReference type="GO" id="GO:0000166">
    <property type="term" value="F:nucleotide binding"/>
    <property type="evidence" value="ECO:0007669"/>
    <property type="project" value="UniProtKB-KW"/>
</dbReference>
<dbReference type="FunFam" id="3.40.1210.10:FF:000001">
    <property type="entry name" value="5'/3'-nucleotidase SurE"/>
    <property type="match status" value="1"/>
</dbReference>
<dbReference type="Gene3D" id="3.40.1210.10">
    <property type="entry name" value="Survival protein SurE-like phosphatase/nucleotidase"/>
    <property type="match status" value="1"/>
</dbReference>
<dbReference type="HAMAP" id="MF_00060">
    <property type="entry name" value="SurE"/>
    <property type="match status" value="1"/>
</dbReference>
<dbReference type="InterPro" id="IPR030048">
    <property type="entry name" value="SurE"/>
</dbReference>
<dbReference type="InterPro" id="IPR002828">
    <property type="entry name" value="SurE-like_Pase/nucleotidase"/>
</dbReference>
<dbReference type="InterPro" id="IPR036523">
    <property type="entry name" value="SurE-like_sf"/>
</dbReference>
<dbReference type="NCBIfam" id="NF001489">
    <property type="entry name" value="PRK00346.1-3"/>
    <property type="match status" value="1"/>
</dbReference>
<dbReference type="NCBIfam" id="NF001490">
    <property type="entry name" value="PRK00346.1-4"/>
    <property type="match status" value="1"/>
</dbReference>
<dbReference type="NCBIfam" id="TIGR00087">
    <property type="entry name" value="surE"/>
    <property type="match status" value="1"/>
</dbReference>
<dbReference type="PANTHER" id="PTHR30457">
    <property type="entry name" value="5'-NUCLEOTIDASE SURE"/>
    <property type="match status" value="1"/>
</dbReference>
<dbReference type="PANTHER" id="PTHR30457:SF12">
    <property type="entry name" value="5'_3'-NUCLEOTIDASE SURE"/>
    <property type="match status" value="1"/>
</dbReference>
<dbReference type="Pfam" id="PF01975">
    <property type="entry name" value="SurE"/>
    <property type="match status" value="1"/>
</dbReference>
<dbReference type="SUPFAM" id="SSF64167">
    <property type="entry name" value="SurE-like"/>
    <property type="match status" value="1"/>
</dbReference>
<keyword id="KW-0963">Cytoplasm</keyword>
<keyword id="KW-0378">Hydrolase</keyword>
<keyword id="KW-0479">Metal-binding</keyword>
<keyword id="KW-0547">Nucleotide-binding</keyword>
<keyword id="KW-1185">Reference proteome</keyword>
<protein>
    <recommendedName>
        <fullName evidence="1">5'-nucleotidase SurE</fullName>
        <ecNumber evidence="1">3.1.3.5</ecNumber>
    </recommendedName>
    <alternativeName>
        <fullName evidence="1">Nucleoside 5'-monophosphate phosphohydrolase</fullName>
    </alternativeName>
</protein>
<evidence type="ECO:0000255" key="1">
    <source>
        <dbReference type="HAMAP-Rule" id="MF_00060"/>
    </source>
</evidence>
<accession>A3QC82</accession>
<sequence length="249" mass="26671">MIKILVSNDDGITAPGIAALSNALAKHYEVMTVGPDRNCSGASNSLTLTNPLRINKLDNGYISVSGTPTDCVHLAIREFYAHEPDIVVSGINAGANMGDDTLYSGTVAAAMEGRFLGLPAIAISLVGRELKHYDTAAYYACKIVAGLIDSPIASDQILNVNVPNLPLDEIKGIRVTRLGARHRAEGMVRMQDPAGREIFWLGPPGEEQDASEGTDFHAVANGYVSVTPLTVDLTAFEQVPKIKQWIEQL</sequence>
<proteinExistence type="inferred from homology"/>
<gene>
    <name evidence="1" type="primary">surE</name>
    <name type="ordered locus">Shew_1210</name>
</gene>
<feature type="chain" id="PRO_0000335275" description="5'-nucleotidase SurE">
    <location>
        <begin position="1"/>
        <end position="249"/>
    </location>
</feature>
<feature type="binding site" evidence="1">
    <location>
        <position position="9"/>
    </location>
    <ligand>
        <name>a divalent metal cation</name>
        <dbReference type="ChEBI" id="CHEBI:60240"/>
    </ligand>
</feature>
<feature type="binding site" evidence="1">
    <location>
        <position position="10"/>
    </location>
    <ligand>
        <name>a divalent metal cation</name>
        <dbReference type="ChEBI" id="CHEBI:60240"/>
    </ligand>
</feature>
<feature type="binding site" evidence="1">
    <location>
        <position position="40"/>
    </location>
    <ligand>
        <name>a divalent metal cation</name>
        <dbReference type="ChEBI" id="CHEBI:60240"/>
    </ligand>
</feature>
<feature type="binding site" evidence="1">
    <location>
        <position position="92"/>
    </location>
    <ligand>
        <name>a divalent metal cation</name>
        <dbReference type="ChEBI" id="CHEBI:60240"/>
    </ligand>
</feature>